<accession>A2RN27</accession>
<feature type="chain" id="PRO_1000020087" description="Methionyl-tRNA formyltransferase">
    <location>
        <begin position="1"/>
        <end position="323"/>
    </location>
</feature>
<feature type="binding site" evidence="1">
    <location>
        <begin position="115"/>
        <end position="118"/>
    </location>
    <ligand>
        <name>(6S)-5,6,7,8-tetrahydrofolate</name>
        <dbReference type="ChEBI" id="CHEBI:57453"/>
    </ligand>
</feature>
<sequence>MTKTKIIFMGTPQFAATVLKGLIDSNKYEILAVVTQPDRKVGRKQELRMTPVKELALTVNLPVLQPEKLSGSVEMTQIMTLLESGEVGIVTAAFGQFLPGKLLVVARFAVNTHASLLPKYRGGAPIHYAIMNGEKEAGVTIMEMIRKMDAGDMIAQNSTPILEEDNVGTMFEKLAFVGRDLLLETLPKYLEGQLKAQAQNEDEVTFSPNISPEEEKIDWNKSAREIFNKVRGMNPFPVAHTLWNGERFKIYESKVADEIVNNSDNPLQAGQIVEKTKKSLKVATGNGILELLTVQPAGKPKMDIVSFLNGLGQKMQVGDKLGD</sequence>
<dbReference type="EC" id="2.1.2.9" evidence="1"/>
<dbReference type="EMBL" id="AM406671">
    <property type="protein sequence ID" value="CAL98714.1"/>
    <property type="molecule type" value="Genomic_DNA"/>
</dbReference>
<dbReference type="RefSeq" id="WP_011835851.1">
    <property type="nucleotide sequence ID" value="NC_009004.1"/>
</dbReference>
<dbReference type="SMR" id="A2RN27"/>
<dbReference type="STRING" id="416870.llmg_2147"/>
<dbReference type="KEGG" id="llm:llmg_2147"/>
<dbReference type="eggNOG" id="COG0223">
    <property type="taxonomic scope" value="Bacteria"/>
</dbReference>
<dbReference type="HOGENOM" id="CLU_033347_1_1_9"/>
<dbReference type="OrthoDB" id="9802815at2"/>
<dbReference type="PhylomeDB" id="A2RN27"/>
<dbReference type="Proteomes" id="UP000000364">
    <property type="component" value="Chromosome"/>
</dbReference>
<dbReference type="GO" id="GO:0005829">
    <property type="term" value="C:cytosol"/>
    <property type="evidence" value="ECO:0007669"/>
    <property type="project" value="TreeGrafter"/>
</dbReference>
<dbReference type="GO" id="GO:0004479">
    <property type="term" value="F:methionyl-tRNA formyltransferase activity"/>
    <property type="evidence" value="ECO:0007669"/>
    <property type="project" value="UniProtKB-UniRule"/>
</dbReference>
<dbReference type="CDD" id="cd08646">
    <property type="entry name" value="FMT_core_Met-tRNA-FMT_N"/>
    <property type="match status" value="1"/>
</dbReference>
<dbReference type="CDD" id="cd08704">
    <property type="entry name" value="Met_tRNA_FMT_C"/>
    <property type="match status" value="1"/>
</dbReference>
<dbReference type="Gene3D" id="3.10.25.10">
    <property type="entry name" value="Formyl transferase, C-terminal domain"/>
    <property type="match status" value="1"/>
</dbReference>
<dbReference type="Gene3D" id="3.40.50.170">
    <property type="entry name" value="Formyl transferase, N-terminal domain"/>
    <property type="match status" value="1"/>
</dbReference>
<dbReference type="HAMAP" id="MF_00182">
    <property type="entry name" value="Formyl_trans"/>
    <property type="match status" value="1"/>
</dbReference>
<dbReference type="InterPro" id="IPR005794">
    <property type="entry name" value="Fmt"/>
</dbReference>
<dbReference type="InterPro" id="IPR005793">
    <property type="entry name" value="Formyl_trans_C"/>
</dbReference>
<dbReference type="InterPro" id="IPR037022">
    <property type="entry name" value="Formyl_trans_C_sf"/>
</dbReference>
<dbReference type="InterPro" id="IPR002376">
    <property type="entry name" value="Formyl_transf_N"/>
</dbReference>
<dbReference type="InterPro" id="IPR036477">
    <property type="entry name" value="Formyl_transf_N_sf"/>
</dbReference>
<dbReference type="InterPro" id="IPR011034">
    <property type="entry name" value="Formyl_transferase-like_C_sf"/>
</dbReference>
<dbReference type="InterPro" id="IPR044135">
    <property type="entry name" value="Met-tRNA-FMT_C"/>
</dbReference>
<dbReference type="InterPro" id="IPR041711">
    <property type="entry name" value="Met-tRNA-FMT_N"/>
</dbReference>
<dbReference type="NCBIfam" id="TIGR00460">
    <property type="entry name" value="fmt"/>
    <property type="match status" value="1"/>
</dbReference>
<dbReference type="PANTHER" id="PTHR11138">
    <property type="entry name" value="METHIONYL-TRNA FORMYLTRANSFERASE"/>
    <property type="match status" value="1"/>
</dbReference>
<dbReference type="PANTHER" id="PTHR11138:SF5">
    <property type="entry name" value="METHIONYL-TRNA FORMYLTRANSFERASE, MITOCHONDRIAL"/>
    <property type="match status" value="1"/>
</dbReference>
<dbReference type="Pfam" id="PF02911">
    <property type="entry name" value="Formyl_trans_C"/>
    <property type="match status" value="1"/>
</dbReference>
<dbReference type="Pfam" id="PF00551">
    <property type="entry name" value="Formyl_trans_N"/>
    <property type="match status" value="1"/>
</dbReference>
<dbReference type="SUPFAM" id="SSF50486">
    <property type="entry name" value="FMT C-terminal domain-like"/>
    <property type="match status" value="1"/>
</dbReference>
<dbReference type="SUPFAM" id="SSF53328">
    <property type="entry name" value="Formyltransferase"/>
    <property type="match status" value="1"/>
</dbReference>
<proteinExistence type="inferred from homology"/>
<gene>
    <name evidence="1" type="primary">fmt</name>
    <name type="ordered locus">llmg_2147</name>
</gene>
<name>FMT_LACLM</name>
<evidence type="ECO:0000255" key="1">
    <source>
        <dbReference type="HAMAP-Rule" id="MF_00182"/>
    </source>
</evidence>
<reference key="1">
    <citation type="journal article" date="2007" name="J. Bacteriol.">
        <title>The complete genome sequence of the lactic acid bacterial paradigm Lactococcus lactis subsp. cremoris MG1363.</title>
        <authorList>
            <person name="Wegmann U."/>
            <person name="O'Connell-Motherway M."/>
            <person name="Zomer A."/>
            <person name="Buist G."/>
            <person name="Shearman C."/>
            <person name="Canchaya C."/>
            <person name="Ventura M."/>
            <person name="Goesmann A."/>
            <person name="Gasson M.J."/>
            <person name="Kuipers O.P."/>
            <person name="van Sinderen D."/>
            <person name="Kok J."/>
        </authorList>
    </citation>
    <scope>NUCLEOTIDE SEQUENCE [LARGE SCALE GENOMIC DNA]</scope>
    <source>
        <strain>MG1363</strain>
    </source>
</reference>
<organism>
    <name type="scientific">Lactococcus lactis subsp. cremoris (strain MG1363)</name>
    <dbReference type="NCBI Taxonomy" id="416870"/>
    <lineage>
        <taxon>Bacteria</taxon>
        <taxon>Bacillati</taxon>
        <taxon>Bacillota</taxon>
        <taxon>Bacilli</taxon>
        <taxon>Lactobacillales</taxon>
        <taxon>Streptococcaceae</taxon>
        <taxon>Lactococcus</taxon>
        <taxon>Lactococcus cremoris subsp. cremoris</taxon>
    </lineage>
</organism>
<keyword id="KW-0648">Protein biosynthesis</keyword>
<keyword id="KW-0808">Transferase</keyword>
<comment type="function">
    <text evidence="1">Attaches a formyl group to the free amino group of methionyl-tRNA(fMet). The formyl group appears to play a dual role in the initiator identity of N-formylmethionyl-tRNA by promoting its recognition by IF2 and preventing the misappropriation of this tRNA by the elongation apparatus.</text>
</comment>
<comment type="catalytic activity">
    <reaction evidence="1">
        <text>L-methionyl-tRNA(fMet) + (6R)-10-formyltetrahydrofolate = N-formyl-L-methionyl-tRNA(fMet) + (6S)-5,6,7,8-tetrahydrofolate + H(+)</text>
        <dbReference type="Rhea" id="RHEA:24380"/>
        <dbReference type="Rhea" id="RHEA-COMP:9952"/>
        <dbReference type="Rhea" id="RHEA-COMP:9953"/>
        <dbReference type="ChEBI" id="CHEBI:15378"/>
        <dbReference type="ChEBI" id="CHEBI:57453"/>
        <dbReference type="ChEBI" id="CHEBI:78530"/>
        <dbReference type="ChEBI" id="CHEBI:78844"/>
        <dbReference type="ChEBI" id="CHEBI:195366"/>
        <dbReference type="EC" id="2.1.2.9"/>
    </reaction>
</comment>
<comment type="similarity">
    <text evidence="1">Belongs to the Fmt family.</text>
</comment>
<protein>
    <recommendedName>
        <fullName evidence="1">Methionyl-tRNA formyltransferase</fullName>
        <ecNumber evidence="1">2.1.2.9</ecNumber>
    </recommendedName>
</protein>